<gene>
    <name type="primary">DRD2</name>
</gene>
<proteinExistence type="evidence at transcript level"/>
<protein>
    <recommendedName>
        <fullName>D(2) dopamine receptor</fullName>
    </recommendedName>
    <alternativeName>
        <fullName>Dopamine D2 receptor</fullName>
    </alternativeName>
</protein>
<comment type="function">
    <text evidence="2 3">Dopamine receptor whose activity is mediated by G proteins which inhibit adenylyl cyclase (By similarity). Positively regulates postnatal regression of retinal hyaloid vessels via suppression of VEGFR2/KDR activity, downstream of OPN5 (By similarity).</text>
</comment>
<comment type="subunit">
    <text evidence="2 3 4">Forms homo- and heterooligomers with DRD4. The interaction with DRD4 may modulate agonist-induced downstream signaling. Interacts with CADPS and CADPS2 (By similarity). Interacts with GPRASP1, PPP1R9B and CLIC6. Interacts with ARRB2 (By similarity). Interacts with HTR2A (By similarity). Interacts with DRD1. Interacts with KCNA2 (By similarity).</text>
</comment>
<comment type="subcellular location">
    <subcellularLocation>
        <location evidence="2">Cell membrane</location>
        <topology evidence="5">Multi-pass membrane protein</topology>
    </subcellularLocation>
    <subcellularLocation>
        <location evidence="2">Golgi apparatus membrane</location>
        <topology evidence="5">Multi-pass membrane protein</topology>
    </subcellularLocation>
</comment>
<comment type="PTM">
    <text evidence="2">Palmitoylated. Palmitoylation which is required for proper localization to the plasma membrane and stability of the receptor could be carried on by ZDHHC4, ZDHHC3 and ZDHHC8.</text>
</comment>
<comment type="similarity">
    <text evidence="6">Belongs to the G-protein coupled receptor 1 family.</text>
</comment>
<dbReference type="EMBL" id="AY394849">
    <property type="protein sequence ID" value="AAQ95735.1"/>
    <property type="molecule type" value="mRNA"/>
</dbReference>
<dbReference type="RefSeq" id="NP_001297128.1">
    <property type="nucleotide sequence ID" value="NM_001310199.1"/>
</dbReference>
<dbReference type="RefSeq" id="XP_004749906.1">
    <property type="nucleotide sequence ID" value="XM_004749849.3"/>
</dbReference>
<dbReference type="RefSeq" id="XP_004749907.1">
    <property type="nucleotide sequence ID" value="XM_004749850.1"/>
</dbReference>
<dbReference type="RefSeq" id="XP_004749908.1">
    <property type="nucleotide sequence ID" value="XM_004749851.2"/>
</dbReference>
<dbReference type="RefSeq" id="XP_044933410.1">
    <property type="nucleotide sequence ID" value="XM_045077475.1"/>
</dbReference>
<dbReference type="SMR" id="Q6TLI9"/>
<dbReference type="FunCoup" id="Q6TLI9">
    <property type="interactions" value="74"/>
</dbReference>
<dbReference type="STRING" id="9669.ENSMPUP00000003847"/>
<dbReference type="GlyCosmos" id="Q6TLI9">
    <property type="glycosylation" value="3 sites, No reported glycans"/>
</dbReference>
<dbReference type="GeneID" id="101676483"/>
<dbReference type="KEGG" id="mpuf:101676483"/>
<dbReference type="CTD" id="1813"/>
<dbReference type="eggNOG" id="KOG3656">
    <property type="taxonomic scope" value="Eukaryota"/>
</dbReference>
<dbReference type="HOGENOM" id="CLU_009579_11_1_1"/>
<dbReference type="InParanoid" id="Q6TLI9"/>
<dbReference type="OMA" id="TPLKGNC"/>
<dbReference type="OrthoDB" id="10034726at2759"/>
<dbReference type="Proteomes" id="UP000000715">
    <property type="component" value="Unplaced"/>
</dbReference>
<dbReference type="GO" id="GO:0030424">
    <property type="term" value="C:axon"/>
    <property type="evidence" value="ECO:0007669"/>
    <property type="project" value="Ensembl"/>
</dbReference>
<dbReference type="GO" id="GO:0060170">
    <property type="term" value="C:ciliary membrane"/>
    <property type="evidence" value="ECO:0007669"/>
    <property type="project" value="Ensembl"/>
</dbReference>
<dbReference type="GO" id="GO:0030425">
    <property type="term" value="C:dendrite"/>
    <property type="evidence" value="ECO:0007669"/>
    <property type="project" value="Ensembl"/>
</dbReference>
<dbReference type="GO" id="GO:0098691">
    <property type="term" value="C:dopaminergic synapse"/>
    <property type="evidence" value="ECO:0007669"/>
    <property type="project" value="Ensembl"/>
</dbReference>
<dbReference type="GO" id="GO:0097648">
    <property type="term" value="C:G protein-coupled receptor complex"/>
    <property type="evidence" value="ECO:0007669"/>
    <property type="project" value="Ensembl"/>
</dbReference>
<dbReference type="GO" id="GO:0098982">
    <property type="term" value="C:GABA-ergic synapse"/>
    <property type="evidence" value="ECO:0007669"/>
    <property type="project" value="Ensembl"/>
</dbReference>
<dbReference type="GO" id="GO:0098978">
    <property type="term" value="C:glutamatergic synapse"/>
    <property type="evidence" value="ECO:0007669"/>
    <property type="project" value="Ensembl"/>
</dbReference>
<dbReference type="GO" id="GO:0000139">
    <property type="term" value="C:Golgi membrane"/>
    <property type="evidence" value="ECO:0007669"/>
    <property type="project" value="UniProtKB-SubCell"/>
</dbReference>
<dbReference type="GO" id="GO:0097730">
    <property type="term" value="C:non-motile cilium"/>
    <property type="evidence" value="ECO:0007669"/>
    <property type="project" value="Ensembl"/>
</dbReference>
<dbReference type="GO" id="GO:0045211">
    <property type="term" value="C:postsynaptic membrane"/>
    <property type="evidence" value="ECO:0007669"/>
    <property type="project" value="Ensembl"/>
</dbReference>
<dbReference type="GO" id="GO:0042734">
    <property type="term" value="C:presynaptic membrane"/>
    <property type="evidence" value="ECO:0007669"/>
    <property type="project" value="Ensembl"/>
</dbReference>
<dbReference type="GO" id="GO:0035240">
    <property type="term" value="F:dopamine binding"/>
    <property type="evidence" value="ECO:0007669"/>
    <property type="project" value="Ensembl"/>
</dbReference>
<dbReference type="GO" id="GO:0001591">
    <property type="term" value="F:dopamine neurotransmitter receptor activity, coupled via Gi/Go"/>
    <property type="evidence" value="ECO:0007669"/>
    <property type="project" value="Ensembl"/>
</dbReference>
<dbReference type="GO" id="GO:0004930">
    <property type="term" value="F:G protein-coupled receptor activity"/>
    <property type="evidence" value="ECO:0007669"/>
    <property type="project" value="UniProtKB-KW"/>
</dbReference>
<dbReference type="GO" id="GO:0001965">
    <property type="term" value="F:G-protein alpha-subunit binding"/>
    <property type="evidence" value="ECO:0007669"/>
    <property type="project" value="Ensembl"/>
</dbReference>
<dbReference type="GO" id="GO:0032795">
    <property type="term" value="F:heterotrimeric G-protein binding"/>
    <property type="evidence" value="ECO:0007669"/>
    <property type="project" value="Ensembl"/>
</dbReference>
<dbReference type="GO" id="GO:0042802">
    <property type="term" value="F:identical protein binding"/>
    <property type="evidence" value="ECO:0007669"/>
    <property type="project" value="Ensembl"/>
</dbReference>
<dbReference type="GO" id="GO:0021984">
    <property type="term" value="P:adenohypophysis development"/>
    <property type="evidence" value="ECO:0007669"/>
    <property type="project" value="Ensembl"/>
</dbReference>
<dbReference type="GO" id="GO:0007195">
    <property type="term" value="P:adenylate cyclase-inhibiting dopamine receptor signaling pathway"/>
    <property type="evidence" value="ECO:0007669"/>
    <property type="project" value="Ensembl"/>
</dbReference>
<dbReference type="GO" id="GO:0007628">
    <property type="term" value="P:adult walking behavior"/>
    <property type="evidence" value="ECO:0007669"/>
    <property type="project" value="Ensembl"/>
</dbReference>
<dbReference type="GO" id="GO:0050482">
    <property type="term" value="P:arachidonate secretion"/>
    <property type="evidence" value="ECO:0007669"/>
    <property type="project" value="Ensembl"/>
</dbReference>
<dbReference type="GO" id="GO:0007409">
    <property type="term" value="P:axonogenesis"/>
    <property type="evidence" value="ECO:0007669"/>
    <property type="project" value="Ensembl"/>
</dbReference>
<dbReference type="GO" id="GO:0048148">
    <property type="term" value="P:behavioral response to cocaine"/>
    <property type="evidence" value="ECO:0007669"/>
    <property type="project" value="Ensembl"/>
</dbReference>
<dbReference type="GO" id="GO:0048149">
    <property type="term" value="P:behavioral response to ethanol"/>
    <property type="evidence" value="ECO:0007669"/>
    <property type="project" value="Ensembl"/>
</dbReference>
<dbReference type="GO" id="GO:0048755">
    <property type="term" value="P:branching morphogenesis of a nerve"/>
    <property type="evidence" value="ECO:0007669"/>
    <property type="project" value="Ensembl"/>
</dbReference>
<dbReference type="GO" id="GO:0021853">
    <property type="term" value="P:cerebral cortex GABAergic interneuron migration"/>
    <property type="evidence" value="ECO:0007669"/>
    <property type="project" value="Ensembl"/>
</dbReference>
<dbReference type="GO" id="GO:0032922">
    <property type="term" value="P:circadian regulation of gene expression"/>
    <property type="evidence" value="ECO:0007669"/>
    <property type="project" value="Ensembl"/>
</dbReference>
<dbReference type="GO" id="GO:0042417">
    <property type="term" value="P:dopamine metabolic process"/>
    <property type="evidence" value="ECO:0007669"/>
    <property type="project" value="Ensembl"/>
</dbReference>
<dbReference type="GO" id="GO:0051583">
    <property type="term" value="P:dopamine uptake involved in synaptic transmission"/>
    <property type="evidence" value="ECO:0007669"/>
    <property type="project" value="Ensembl"/>
</dbReference>
<dbReference type="GO" id="GO:0050673">
    <property type="term" value="P:epithelial cell proliferation"/>
    <property type="evidence" value="ECO:0007669"/>
    <property type="project" value="Ensembl"/>
</dbReference>
<dbReference type="GO" id="GO:0007631">
    <property type="term" value="P:feeding behavior"/>
    <property type="evidence" value="ECO:0007669"/>
    <property type="project" value="Ensembl"/>
</dbReference>
<dbReference type="GO" id="GO:0007625">
    <property type="term" value="P:grooming behavior"/>
    <property type="evidence" value="ECO:0007669"/>
    <property type="project" value="Ensembl"/>
</dbReference>
<dbReference type="GO" id="GO:1990384">
    <property type="term" value="P:hyaloid vascular plexus regression"/>
    <property type="evidence" value="ECO:0000250"/>
    <property type="project" value="UniProtKB"/>
</dbReference>
<dbReference type="GO" id="GO:0045776">
    <property type="term" value="P:negative regulation of blood pressure"/>
    <property type="evidence" value="ECO:0007669"/>
    <property type="project" value="Ensembl"/>
</dbReference>
<dbReference type="GO" id="GO:0051481">
    <property type="term" value="P:negative regulation of cytosolic calcium ion concentration"/>
    <property type="evidence" value="ECO:0007669"/>
    <property type="project" value="TreeGrafter"/>
</dbReference>
<dbReference type="GO" id="GO:0060160">
    <property type="term" value="P:negative regulation of dopamine receptor signaling pathway"/>
    <property type="evidence" value="ECO:0007669"/>
    <property type="project" value="Ensembl"/>
</dbReference>
<dbReference type="GO" id="GO:0050680">
    <property type="term" value="P:negative regulation of epithelial cell proliferation"/>
    <property type="evidence" value="ECO:0007669"/>
    <property type="project" value="Ensembl"/>
</dbReference>
<dbReference type="GO" id="GO:0045824">
    <property type="term" value="P:negative regulation of innate immune response"/>
    <property type="evidence" value="ECO:0007669"/>
    <property type="project" value="Ensembl"/>
</dbReference>
<dbReference type="GO" id="GO:2001223">
    <property type="term" value="P:negative regulation of neuron migration"/>
    <property type="evidence" value="ECO:0007669"/>
    <property type="project" value="Ensembl"/>
</dbReference>
<dbReference type="GO" id="GO:0051898">
    <property type="term" value="P:negative regulation of phosphatidylinositol 3-kinase/protein kinase B signal transduction"/>
    <property type="evidence" value="ECO:0007669"/>
    <property type="project" value="Ensembl"/>
</dbReference>
<dbReference type="GO" id="GO:0050709">
    <property type="term" value="P:negative regulation of protein secretion"/>
    <property type="evidence" value="ECO:0007669"/>
    <property type="project" value="Ensembl"/>
</dbReference>
<dbReference type="GO" id="GO:0051967">
    <property type="term" value="P:negative regulation of synaptic transmission, glutamatergic"/>
    <property type="evidence" value="ECO:0007669"/>
    <property type="project" value="Ensembl"/>
</dbReference>
<dbReference type="GO" id="GO:0001976">
    <property type="term" value="P:nervous system process involved in regulation of systemic arterial blood pressure"/>
    <property type="evidence" value="ECO:0007669"/>
    <property type="project" value="Ensembl"/>
</dbReference>
<dbReference type="GO" id="GO:0007405">
    <property type="term" value="P:neuroblast proliferation"/>
    <property type="evidence" value="ECO:0007669"/>
    <property type="project" value="Ensembl"/>
</dbReference>
<dbReference type="GO" id="GO:0007270">
    <property type="term" value="P:neuron-neuron synaptic transmission"/>
    <property type="evidence" value="ECO:0007669"/>
    <property type="project" value="Ensembl"/>
</dbReference>
<dbReference type="GO" id="GO:0030432">
    <property type="term" value="P:peristalsis"/>
    <property type="evidence" value="ECO:0007669"/>
    <property type="project" value="Ensembl"/>
</dbReference>
<dbReference type="GO" id="GO:0043491">
    <property type="term" value="P:phosphatidylinositol 3-kinase/protein kinase B signal transduction"/>
    <property type="evidence" value="ECO:0007669"/>
    <property type="project" value="Ensembl"/>
</dbReference>
<dbReference type="GO" id="GO:0060158">
    <property type="term" value="P:phospholipase C-activating dopamine receptor signaling pathway"/>
    <property type="evidence" value="ECO:0007669"/>
    <property type="project" value="Ensembl"/>
</dbReference>
<dbReference type="GO" id="GO:0043473">
    <property type="term" value="P:pigmentation"/>
    <property type="evidence" value="ECO:0007669"/>
    <property type="project" value="Ensembl"/>
</dbReference>
<dbReference type="GO" id="GO:0032467">
    <property type="term" value="P:positive regulation of cytokinesis"/>
    <property type="evidence" value="ECO:0007669"/>
    <property type="project" value="Ensembl"/>
</dbReference>
<dbReference type="GO" id="GO:0051586">
    <property type="term" value="P:positive regulation of dopamine uptake involved in synaptic transmission"/>
    <property type="evidence" value="ECO:0007669"/>
    <property type="project" value="Ensembl"/>
</dbReference>
<dbReference type="GO" id="GO:1900168">
    <property type="term" value="P:positive regulation of glial cell-derived neurotrophic factor production"/>
    <property type="evidence" value="ECO:0007669"/>
    <property type="project" value="Ensembl"/>
</dbReference>
<dbReference type="GO" id="GO:0060124">
    <property type="term" value="P:positive regulation of growth hormone secretion"/>
    <property type="evidence" value="ECO:0007669"/>
    <property type="project" value="Ensembl"/>
</dbReference>
<dbReference type="GO" id="GO:0040018">
    <property type="term" value="P:positive regulation of multicellular organism growth"/>
    <property type="evidence" value="ECO:0007669"/>
    <property type="project" value="Ensembl"/>
</dbReference>
<dbReference type="GO" id="GO:0002052">
    <property type="term" value="P:positive regulation of neuroblast proliferation"/>
    <property type="evidence" value="ECO:0007669"/>
    <property type="project" value="Ensembl"/>
</dbReference>
<dbReference type="GO" id="GO:0035815">
    <property type="term" value="P:positive regulation of renal sodium excretion"/>
    <property type="evidence" value="ECO:0007669"/>
    <property type="project" value="Ensembl"/>
</dbReference>
<dbReference type="GO" id="GO:0035810">
    <property type="term" value="P:positive regulation of urine volume"/>
    <property type="evidence" value="ECO:0007669"/>
    <property type="project" value="Ensembl"/>
</dbReference>
<dbReference type="GO" id="GO:0060134">
    <property type="term" value="P:prepulse inhibition"/>
    <property type="evidence" value="ECO:0007669"/>
    <property type="project" value="Ensembl"/>
</dbReference>
<dbReference type="GO" id="GO:0099171">
    <property type="term" value="P:presynaptic modulation of chemical synaptic transmission"/>
    <property type="evidence" value="ECO:0007669"/>
    <property type="project" value="Ensembl"/>
</dbReference>
<dbReference type="GO" id="GO:0008104">
    <property type="term" value="P:protein localization"/>
    <property type="evidence" value="ECO:0007669"/>
    <property type="project" value="Ensembl"/>
</dbReference>
<dbReference type="GO" id="GO:0014059">
    <property type="term" value="P:regulation of dopamine secretion"/>
    <property type="evidence" value="ECO:0007669"/>
    <property type="project" value="TreeGrafter"/>
</dbReference>
<dbReference type="GO" id="GO:0002027">
    <property type="term" value="P:regulation of heart rate"/>
    <property type="evidence" value="ECO:0007669"/>
    <property type="project" value="Ensembl"/>
</dbReference>
<dbReference type="GO" id="GO:0048169">
    <property type="term" value="P:regulation of long-term neuronal synaptic plasticity"/>
    <property type="evidence" value="ECO:0007669"/>
    <property type="project" value="Ensembl"/>
</dbReference>
<dbReference type="GO" id="GO:0043266">
    <property type="term" value="P:regulation of potassium ion transport"/>
    <property type="evidence" value="ECO:0007669"/>
    <property type="project" value="Ensembl"/>
</dbReference>
<dbReference type="GO" id="GO:0002028">
    <property type="term" value="P:regulation of sodium ion transport"/>
    <property type="evidence" value="ECO:0007669"/>
    <property type="project" value="Ensembl"/>
</dbReference>
<dbReference type="GO" id="GO:0032228">
    <property type="term" value="P:regulation of synaptic transmission, GABAergic"/>
    <property type="evidence" value="ECO:0007669"/>
    <property type="project" value="Ensembl"/>
</dbReference>
<dbReference type="GO" id="GO:0001975">
    <property type="term" value="P:response to amphetamine"/>
    <property type="evidence" value="ECO:0007669"/>
    <property type="project" value="Ensembl"/>
</dbReference>
<dbReference type="GO" id="GO:0034776">
    <property type="term" value="P:response to histamine"/>
    <property type="evidence" value="ECO:0007669"/>
    <property type="project" value="Ensembl"/>
</dbReference>
<dbReference type="GO" id="GO:0043278">
    <property type="term" value="P:response to morphine"/>
    <property type="evidence" value="ECO:0007669"/>
    <property type="project" value="Ensembl"/>
</dbReference>
<dbReference type="GO" id="GO:0009410">
    <property type="term" value="P:response to xenobiotic stimulus"/>
    <property type="evidence" value="ECO:0007669"/>
    <property type="project" value="Ensembl"/>
</dbReference>
<dbReference type="GO" id="GO:0007608">
    <property type="term" value="P:sensory perception of smell"/>
    <property type="evidence" value="ECO:0007669"/>
    <property type="project" value="Ensembl"/>
</dbReference>
<dbReference type="GO" id="GO:0001659">
    <property type="term" value="P:temperature homeostasis"/>
    <property type="evidence" value="ECO:0007669"/>
    <property type="project" value="Ensembl"/>
</dbReference>
<dbReference type="GO" id="GO:0008542">
    <property type="term" value="P:visual learning"/>
    <property type="evidence" value="ECO:0007669"/>
    <property type="project" value="Ensembl"/>
</dbReference>
<dbReference type="CDD" id="cd15309">
    <property type="entry name" value="7tmA_D2_dopamine_R"/>
    <property type="match status" value="1"/>
</dbReference>
<dbReference type="FunFam" id="1.20.1070.10:FF:000099">
    <property type="entry name" value="D(2) dopamine receptor"/>
    <property type="match status" value="1"/>
</dbReference>
<dbReference type="FunFam" id="1.20.1070.10:FF:000086">
    <property type="entry name" value="Dopamine D2 receptor 2"/>
    <property type="match status" value="1"/>
</dbReference>
<dbReference type="Gene3D" id="1.20.1070.10">
    <property type="entry name" value="Rhodopsin 7-helix transmembrane proteins"/>
    <property type="match status" value="2"/>
</dbReference>
<dbReference type="InterPro" id="IPR001922">
    <property type="entry name" value="Dopamine_D2_rcpt"/>
</dbReference>
<dbReference type="InterPro" id="IPR000929">
    <property type="entry name" value="Dopamine_rcpt"/>
</dbReference>
<dbReference type="InterPro" id="IPR000276">
    <property type="entry name" value="GPCR_Rhodpsn"/>
</dbReference>
<dbReference type="InterPro" id="IPR017452">
    <property type="entry name" value="GPCR_Rhodpsn_7TM"/>
</dbReference>
<dbReference type="PANTHER" id="PTHR24248">
    <property type="entry name" value="ADRENERGIC RECEPTOR-RELATED G-PROTEIN COUPLED RECEPTOR"/>
    <property type="match status" value="1"/>
</dbReference>
<dbReference type="PANTHER" id="PTHR24248:SF87">
    <property type="entry name" value="D(2) DOPAMINE RECEPTOR"/>
    <property type="match status" value="1"/>
</dbReference>
<dbReference type="Pfam" id="PF00001">
    <property type="entry name" value="7tm_1"/>
    <property type="match status" value="1"/>
</dbReference>
<dbReference type="PRINTS" id="PR00567">
    <property type="entry name" value="DOPAMINED2R"/>
</dbReference>
<dbReference type="PRINTS" id="PR00242">
    <property type="entry name" value="DOPAMINER"/>
</dbReference>
<dbReference type="PRINTS" id="PR00237">
    <property type="entry name" value="GPCRRHODOPSN"/>
</dbReference>
<dbReference type="SMART" id="SM01381">
    <property type="entry name" value="7TM_GPCR_Srsx"/>
    <property type="match status" value="1"/>
</dbReference>
<dbReference type="SUPFAM" id="SSF81321">
    <property type="entry name" value="Family A G protein-coupled receptor-like"/>
    <property type="match status" value="1"/>
</dbReference>
<dbReference type="PROSITE" id="PS00237">
    <property type="entry name" value="G_PROTEIN_RECEP_F1_1"/>
    <property type="match status" value="1"/>
</dbReference>
<dbReference type="PROSITE" id="PS50262">
    <property type="entry name" value="G_PROTEIN_RECEP_F1_2"/>
    <property type="match status" value="1"/>
</dbReference>
<accession>Q6TLI9</accession>
<sequence length="443" mass="50625">MDPLNLSWYDDDPESRNWSRPFNGSEGKVGKPHYNYYAMLLTLLIFVIVFGNVLVCMAVSREKALQTTTNYLIVSLAVADLLVATLVMPWVVYLEVVGEWKFSRIHCDIFVTLDVMMCTASILNLCAISIDRYTAVAMPMLYNTRYSSKRRVTVMIAIVWVLSFTISCPLLFGLNNTDQNECIIANPAFVVYSSVVSFYVPFIVTLLVYIKIYIVLRRRRKRVNTKRSSRAFRANLKAPLKGNYTHPEDMKLCTVIMKSNGSFPVNRRRVEAARRAQELEMEMLSSTSPPERTRYSPIPPSHHQLTLPDPSHHGLHSTANSPVKPEKNGHAKDHPKIAKIFEIQSMPNGKTRTSLKTMSRRKLSQQKEKKATQMLAIVLGVFIICWLPFFITHILNIHCDCNIPPVLYSAFTWLGYVNSAVNPIIYTTFNVEFRKAFMKILHC</sequence>
<name>DRD2_MUSPF</name>
<keyword id="KW-1003">Cell membrane</keyword>
<keyword id="KW-1015">Disulfide bond</keyword>
<keyword id="KW-0297">G-protein coupled receptor</keyword>
<keyword id="KW-0325">Glycoprotein</keyword>
<keyword id="KW-0333">Golgi apparatus</keyword>
<keyword id="KW-0449">Lipoprotein</keyword>
<keyword id="KW-0472">Membrane</keyword>
<keyword id="KW-0564">Palmitate</keyword>
<keyword id="KW-0675">Receptor</keyword>
<keyword id="KW-1185">Reference proteome</keyword>
<keyword id="KW-0807">Transducer</keyword>
<keyword id="KW-0812">Transmembrane</keyword>
<keyword id="KW-1133">Transmembrane helix</keyword>
<organism>
    <name type="scientific">Mustela putorius furo</name>
    <name type="common">European domestic ferret</name>
    <name type="synonym">Mustela furo</name>
    <dbReference type="NCBI Taxonomy" id="9669"/>
    <lineage>
        <taxon>Eukaryota</taxon>
        <taxon>Metazoa</taxon>
        <taxon>Chordata</taxon>
        <taxon>Craniata</taxon>
        <taxon>Vertebrata</taxon>
        <taxon>Euteleostomi</taxon>
        <taxon>Mammalia</taxon>
        <taxon>Eutheria</taxon>
        <taxon>Laurasiatheria</taxon>
        <taxon>Carnivora</taxon>
        <taxon>Caniformia</taxon>
        <taxon>Musteloidea</taxon>
        <taxon>Mustelidae</taxon>
        <taxon>Mustelinae</taxon>
        <taxon>Mustela</taxon>
    </lineage>
</organism>
<reference key="1">
    <citation type="submission" date="2003-09" db="EMBL/GenBank/DDBJ databases">
        <title>Cloning and functional expression of ferret dopamine D2 and D4 receptors.</title>
        <authorList>
            <person name="Gubbins E.J."/>
            <person name="Masters J."/>
            <person name="Moreland R.B."/>
        </authorList>
    </citation>
    <scope>NUCLEOTIDE SEQUENCE [MRNA]</scope>
</reference>
<feature type="chain" id="PRO_0000247892" description="D(2) dopamine receptor">
    <location>
        <begin position="1"/>
        <end position="443"/>
    </location>
</feature>
<feature type="topological domain" description="Extracellular" evidence="1">
    <location>
        <begin position="1"/>
        <end position="37"/>
    </location>
</feature>
<feature type="transmembrane region" description="Helical; Name=1" evidence="1">
    <location>
        <begin position="38"/>
        <end position="60"/>
    </location>
</feature>
<feature type="topological domain" description="Cytoplasmic" evidence="1">
    <location>
        <begin position="61"/>
        <end position="70"/>
    </location>
</feature>
<feature type="transmembrane region" description="Helical; Name=2" evidence="1">
    <location>
        <begin position="71"/>
        <end position="93"/>
    </location>
</feature>
<feature type="topological domain" description="Extracellular" evidence="1">
    <location>
        <begin position="94"/>
        <end position="108"/>
    </location>
</feature>
<feature type="transmembrane region" description="Helical; Name=3" evidence="1">
    <location>
        <begin position="109"/>
        <end position="130"/>
    </location>
</feature>
<feature type="topological domain" description="Cytoplasmic" evidence="1">
    <location>
        <begin position="131"/>
        <end position="151"/>
    </location>
</feature>
<feature type="transmembrane region" description="Helical; Name=4" evidence="1">
    <location>
        <begin position="152"/>
        <end position="172"/>
    </location>
</feature>
<feature type="topological domain" description="Extracellular" evidence="1">
    <location>
        <begin position="173"/>
        <end position="188"/>
    </location>
</feature>
<feature type="transmembrane region" description="Helical; Name=5" evidence="1">
    <location>
        <begin position="189"/>
        <end position="213"/>
    </location>
</feature>
<feature type="topological domain" description="Cytoplasmic" evidence="1">
    <location>
        <begin position="214"/>
        <end position="373"/>
    </location>
</feature>
<feature type="transmembrane region" description="Helical; Name=6" evidence="1">
    <location>
        <begin position="374"/>
        <end position="395"/>
    </location>
</feature>
<feature type="topological domain" description="Extracellular" evidence="1">
    <location>
        <begin position="396"/>
        <end position="409"/>
    </location>
</feature>
<feature type="transmembrane region" description="Helical; Name=7" evidence="1">
    <location>
        <begin position="410"/>
        <end position="431"/>
    </location>
</feature>
<feature type="topological domain" description="Cytoplasmic" evidence="1">
    <location>
        <begin position="432"/>
        <end position="443"/>
    </location>
</feature>
<feature type="region of interest" description="Interaction with PPP1R9B" evidence="1">
    <location>
        <begin position="211"/>
        <end position="373"/>
    </location>
</feature>
<feature type="region of interest" description="Disordered" evidence="7">
    <location>
        <begin position="282"/>
        <end position="331"/>
    </location>
</feature>
<feature type="site" description="Important for receptor activation" evidence="1">
    <location>
        <position position="194"/>
    </location>
</feature>
<feature type="site" description="Important for receptor activation" evidence="1">
    <location>
        <position position="197"/>
    </location>
</feature>
<feature type="lipid moiety-binding region" description="S-palmitoyl cysteine" evidence="2">
    <location>
        <position position="443"/>
    </location>
</feature>
<feature type="glycosylation site" description="N-linked (GlcNAc...) asparagine" evidence="5">
    <location>
        <position position="5"/>
    </location>
</feature>
<feature type="glycosylation site" description="N-linked (GlcNAc...) asparagine" evidence="5">
    <location>
        <position position="17"/>
    </location>
</feature>
<feature type="glycosylation site" description="N-linked (GlcNAc...) asparagine" evidence="5">
    <location>
        <position position="23"/>
    </location>
</feature>
<feature type="disulfide bond" evidence="6">
    <location>
        <begin position="107"/>
        <end position="182"/>
    </location>
</feature>
<feature type="disulfide bond" evidence="6">
    <location>
        <begin position="399"/>
        <end position="401"/>
    </location>
</feature>
<evidence type="ECO:0000250" key="1"/>
<evidence type="ECO:0000250" key="2">
    <source>
        <dbReference type="UniProtKB" id="P14416"/>
    </source>
</evidence>
<evidence type="ECO:0000250" key="3">
    <source>
        <dbReference type="UniProtKB" id="P61168"/>
    </source>
</evidence>
<evidence type="ECO:0000250" key="4">
    <source>
        <dbReference type="UniProtKB" id="P61169"/>
    </source>
</evidence>
<evidence type="ECO:0000255" key="5"/>
<evidence type="ECO:0000255" key="6">
    <source>
        <dbReference type="PROSITE-ProRule" id="PRU00521"/>
    </source>
</evidence>
<evidence type="ECO:0000256" key="7">
    <source>
        <dbReference type="SAM" id="MobiDB-lite"/>
    </source>
</evidence>